<organism>
    <name type="scientific">Danio rerio</name>
    <name type="common">Zebrafish</name>
    <name type="synonym">Brachydanio rerio</name>
    <dbReference type="NCBI Taxonomy" id="7955"/>
    <lineage>
        <taxon>Eukaryota</taxon>
        <taxon>Metazoa</taxon>
        <taxon>Chordata</taxon>
        <taxon>Craniata</taxon>
        <taxon>Vertebrata</taxon>
        <taxon>Euteleostomi</taxon>
        <taxon>Actinopterygii</taxon>
        <taxon>Neopterygii</taxon>
        <taxon>Teleostei</taxon>
        <taxon>Ostariophysi</taxon>
        <taxon>Cypriniformes</taxon>
        <taxon>Danionidae</taxon>
        <taxon>Danioninae</taxon>
        <taxon>Danio</taxon>
    </lineage>
</organism>
<feature type="chain" id="PRO_0000337754" description="Probable UDP-sugar transporter protein SLC35A4">
    <location>
        <begin position="1"/>
        <end position="314"/>
    </location>
</feature>
<feature type="topological domain" description="Cytoplasmic" evidence="2">
    <location>
        <begin position="1"/>
        <end position="20"/>
    </location>
</feature>
<feature type="transmembrane region" description="Helical" evidence="3">
    <location>
        <begin position="21"/>
        <end position="41"/>
    </location>
</feature>
<feature type="topological domain" description="Lumenal" evidence="2">
    <location>
        <begin position="42"/>
        <end position="54"/>
    </location>
</feature>
<feature type="transmembrane region" description="Helical" evidence="3">
    <location>
        <begin position="55"/>
        <end position="75"/>
    </location>
</feature>
<feature type="topological domain" description="Cytoplasmic" evidence="2">
    <location>
        <begin position="76"/>
        <end position="88"/>
    </location>
</feature>
<feature type="transmembrane region" description="Helical" evidence="3">
    <location>
        <begin position="89"/>
        <end position="109"/>
    </location>
</feature>
<feature type="topological domain" description="Lumenal" evidence="2">
    <location>
        <begin position="110"/>
        <end position="145"/>
    </location>
</feature>
<feature type="transmembrane region" description="Helical" evidence="3">
    <location>
        <begin position="146"/>
        <end position="166"/>
    </location>
</feature>
<feature type="topological domain" description="Cytoplasmic" evidence="2">
    <location>
        <begin position="167"/>
        <end position="175"/>
    </location>
</feature>
<feature type="transmembrane region" description="Helical" evidence="3">
    <location>
        <begin position="176"/>
        <end position="196"/>
    </location>
</feature>
<feature type="topological domain" description="Lumenal" evidence="2">
    <location>
        <begin position="197"/>
        <end position="206"/>
    </location>
</feature>
<feature type="transmembrane region" description="Helical" evidence="3">
    <location>
        <begin position="207"/>
        <end position="227"/>
    </location>
</feature>
<feature type="topological domain" description="Cytoplasmic" evidence="2">
    <location>
        <begin position="228"/>
        <end position="242"/>
    </location>
</feature>
<feature type="transmembrane region" description="Helical" evidence="3">
    <location>
        <begin position="243"/>
        <end position="263"/>
    </location>
</feature>
<feature type="topological domain" description="Lumenal" evidence="2">
    <location>
        <begin position="264"/>
        <end position="267"/>
    </location>
</feature>
<feature type="transmembrane region" description="Helical" evidence="3">
    <location>
        <begin position="268"/>
        <end position="290"/>
    </location>
</feature>
<feature type="topological domain" description="Cytoplasmic" evidence="2">
    <location>
        <begin position="291"/>
        <end position="314"/>
    </location>
</feature>
<keyword id="KW-0333">Golgi apparatus</keyword>
<keyword id="KW-0472">Membrane</keyword>
<keyword id="KW-1185">Reference proteome</keyword>
<keyword id="KW-0762">Sugar transport</keyword>
<keyword id="KW-0812">Transmembrane</keyword>
<keyword id="KW-1133">Transmembrane helix</keyword>
<keyword id="KW-0813">Transport</keyword>
<dbReference type="EMBL" id="BC125875">
    <property type="protein sequence ID" value="AAI25876.1"/>
    <property type="molecule type" value="mRNA"/>
</dbReference>
<dbReference type="SMR" id="A0JMG9"/>
<dbReference type="FunCoup" id="A0JMG9">
    <property type="interactions" value="331"/>
</dbReference>
<dbReference type="STRING" id="7955.ENSDARP00000135553"/>
<dbReference type="PaxDb" id="7955-ENSDARP00000084629"/>
<dbReference type="AGR" id="ZFIN:ZDB-GENE-061103-595"/>
<dbReference type="ZFIN" id="ZDB-GENE-061103-595">
    <property type="gene designation" value="slc35a4"/>
</dbReference>
<dbReference type="eggNOG" id="KOG2234">
    <property type="taxonomic scope" value="Eukaryota"/>
</dbReference>
<dbReference type="InParanoid" id="A0JMG9"/>
<dbReference type="PhylomeDB" id="A0JMG9"/>
<dbReference type="PRO" id="PR:A0JMG9"/>
<dbReference type="Proteomes" id="UP000000437">
    <property type="component" value="Unplaced"/>
</dbReference>
<dbReference type="GO" id="GO:0005794">
    <property type="term" value="C:Golgi apparatus"/>
    <property type="evidence" value="ECO:0000250"/>
    <property type="project" value="UniProtKB"/>
</dbReference>
<dbReference type="GO" id="GO:0000139">
    <property type="term" value="C:Golgi membrane"/>
    <property type="evidence" value="ECO:0000250"/>
    <property type="project" value="UniProtKB"/>
</dbReference>
<dbReference type="GO" id="GO:0015165">
    <property type="term" value="F:pyrimidine nucleotide-sugar transmembrane transporter activity"/>
    <property type="evidence" value="ECO:0007669"/>
    <property type="project" value="InterPro"/>
</dbReference>
<dbReference type="GO" id="GO:0022857">
    <property type="term" value="F:transmembrane transporter activity"/>
    <property type="evidence" value="ECO:0000318"/>
    <property type="project" value="GO_Central"/>
</dbReference>
<dbReference type="GO" id="GO:0055085">
    <property type="term" value="P:transmembrane transport"/>
    <property type="evidence" value="ECO:0000318"/>
    <property type="project" value="GO_Central"/>
</dbReference>
<dbReference type="InterPro" id="IPR007271">
    <property type="entry name" value="Nuc_sug_transpt"/>
</dbReference>
<dbReference type="NCBIfam" id="TIGR00803">
    <property type="entry name" value="nst"/>
    <property type="match status" value="1"/>
</dbReference>
<dbReference type="PANTHER" id="PTHR10231">
    <property type="entry name" value="NUCLEOTIDE-SUGAR TRANSMEMBRANE TRANSPORTER"/>
    <property type="match status" value="1"/>
</dbReference>
<dbReference type="Pfam" id="PF04142">
    <property type="entry name" value="Nuc_sug_transp"/>
    <property type="match status" value="1"/>
</dbReference>
<dbReference type="PIRSF" id="PIRSF005799">
    <property type="entry name" value="UDP-gal_transpt"/>
    <property type="match status" value="1"/>
</dbReference>
<dbReference type="SUPFAM" id="SSF103481">
    <property type="entry name" value="Multidrug resistance efflux transporter EmrE"/>
    <property type="match status" value="1"/>
</dbReference>
<proteinExistence type="evidence at transcript level"/>
<name>S35A4_DANRE</name>
<sequence length="314" mass="34293">MIAISADESPESSSPALRLRWLFLLLLLVLIYGSHAPLLSLCKTQAQIPFSASSCVLLIETSKLFISFASLLASGSVSTLRISISMTTASPYAVPAVLYAFNNHLVVFMQAYMDPSSFQVLSNLKIASTALLYTSCLGKRLHRRQWFAMGLLVSAGVSHSCFSYDLEGKRETAVYITSWGLLLVLVYCFVSGLAAVYTERVLKSQRLPLSMQNLFLYTFGVVVNLASHLSGGEQKGFFEGYSAVVWVIVAGQVANGLLMSVVMKHGTGITRLFVISSAMLVNAVLSWGILGVQLTGYFLFPVVLIGWAVYLYYT</sequence>
<reference key="1">
    <citation type="submission" date="2006-10" db="EMBL/GenBank/DDBJ databases">
        <authorList>
            <consortium name="NIH - Zebrafish Gene Collection (ZGC) project"/>
        </authorList>
    </citation>
    <scope>NUCLEOTIDE SEQUENCE [LARGE SCALE MRNA]</scope>
</reference>
<protein>
    <recommendedName>
        <fullName evidence="4">Probable UDP-sugar transporter protein SLC35A4</fullName>
    </recommendedName>
    <alternativeName>
        <fullName evidence="2">Solute carrier family 35 member A4</fullName>
    </alternativeName>
</protein>
<evidence type="ECO:0000250" key="1">
    <source>
        <dbReference type="UniProtKB" id="Q91ZR7"/>
    </source>
</evidence>
<evidence type="ECO:0000250" key="2">
    <source>
        <dbReference type="UniProtKB" id="Q96G79"/>
    </source>
</evidence>
<evidence type="ECO:0000255" key="3"/>
<evidence type="ECO:0000305" key="4"/>
<evidence type="ECO:0000312" key="5">
    <source>
        <dbReference type="EMBL" id="AAI25876.1"/>
    </source>
</evidence>
<gene>
    <name evidence="2" type="primary">slc35a4</name>
    <name evidence="5" type="ORF">zgc:153507</name>
</gene>
<comment type="function">
    <text evidence="2">Mediates the transport of CDP-ribitol (By similarity). Does not exhibit CMP-sialic acid, UDP-galactose and UDP-N-acetylglucosamine transport activity (By similarity).</text>
</comment>
<comment type="catalytic activity">
    <reaction evidence="2">
        <text>CDP-L-ribitol(in) + CDP(out) = CDP-L-ribitol(out) + CDP(in)</text>
        <dbReference type="Rhea" id="RHEA:71579"/>
        <dbReference type="ChEBI" id="CHEBI:57608"/>
        <dbReference type="ChEBI" id="CHEBI:58069"/>
    </reaction>
</comment>
<comment type="subcellular location">
    <subcellularLocation>
        <location evidence="1">Golgi apparatus membrane</location>
        <topology evidence="3">Multi-pass membrane protein</topology>
    </subcellularLocation>
</comment>
<comment type="similarity">
    <text evidence="4">Belongs to the nucleotide-sugar transporter family. SLC35A subfamily.</text>
</comment>
<accession>A0JMG9</accession>